<accession>A1UFE5</accession>
<evidence type="ECO:0000255" key="1">
    <source>
        <dbReference type="HAMAP-Rule" id="MF_00044"/>
    </source>
</evidence>
<evidence type="ECO:0000256" key="2">
    <source>
        <dbReference type="SAM" id="MobiDB-lite"/>
    </source>
</evidence>
<keyword id="KW-0030">Aminoacyl-tRNA synthetase</keyword>
<keyword id="KW-0067">ATP-binding</keyword>
<keyword id="KW-0963">Cytoplasm</keyword>
<keyword id="KW-0436">Ligase</keyword>
<keyword id="KW-0547">Nucleotide-binding</keyword>
<keyword id="KW-0648">Protein biosynthesis</keyword>
<comment type="function">
    <text evidence="1">Aspartyl-tRNA synthetase with relaxed tRNA specificity since it is able to aspartylate not only its cognate tRNA(Asp) but also tRNA(Asn). Reaction proceeds in two steps: L-aspartate is first activated by ATP to form Asp-AMP and then transferred to the acceptor end of tRNA(Asp/Asn).</text>
</comment>
<comment type="catalytic activity">
    <reaction evidence="1">
        <text>tRNA(Asx) + L-aspartate + ATP = L-aspartyl-tRNA(Asx) + AMP + diphosphate</text>
        <dbReference type="Rhea" id="RHEA:18349"/>
        <dbReference type="Rhea" id="RHEA-COMP:9710"/>
        <dbReference type="Rhea" id="RHEA-COMP:9711"/>
        <dbReference type="ChEBI" id="CHEBI:29991"/>
        <dbReference type="ChEBI" id="CHEBI:30616"/>
        <dbReference type="ChEBI" id="CHEBI:33019"/>
        <dbReference type="ChEBI" id="CHEBI:78442"/>
        <dbReference type="ChEBI" id="CHEBI:78516"/>
        <dbReference type="ChEBI" id="CHEBI:456215"/>
        <dbReference type="EC" id="6.1.1.23"/>
    </reaction>
</comment>
<comment type="subunit">
    <text evidence="1">Homodimer.</text>
</comment>
<comment type="subcellular location">
    <subcellularLocation>
        <location evidence="1">Cytoplasm</location>
    </subcellularLocation>
</comment>
<comment type="similarity">
    <text evidence="1">Belongs to the class-II aminoacyl-tRNA synthetase family. Type 1 subfamily.</text>
</comment>
<name>SYDND_MYCSK</name>
<dbReference type="EC" id="6.1.1.23" evidence="1"/>
<dbReference type="EMBL" id="CP000518">
    <property type="protein sequence ID" value="ABL91553.1"/>
    <property type="molecule type" value="Genomic_DNA"/>
</dbReference>
<dbReference type="SMR" id="A1UFE5"/>
<dbReference type="STRING" id="189918.Mkms_2355"/>
<dbReference type="KEGG" id="mkm:Mkms_2355"/>
<dbReference type="HOGENOM" id="CLU_014330_3_2_11"/>
<dbReference type="OrthoDB" id="9802326at2"/>
<dbReference type="GO" id="GO:0005737">
    <property type="term" value="C:cytoplasm"/>
    <property type="evidence" value="ECO:0007669"/>
    <property type="project" value="UniProtKB-SubCell"/>
</dbReference>
<dbReference type="GO" id="GO:0004815">
    <property type="term" value="F:aspartate-tRNA ligase activity"/>
    <property type="evidence" value="ECO:0007669"/>
    <property type="project" value="UniProtKB-UniRule"/>
</dbReference>
<dbReference type="GO" id="GO:0050560">
    <property type="term" value="F:aspartate-tRNA(Asn) ligase activity"/>
    <property type="evidence" value="ECO:0007669"/>
    <property type="project" value="UniProtKB-EC"/>
</dbReference>
<dbReference type="GO" id="GO:0005524">
    <property type="term" value="F:ATP binding"/>
    <property type="evidence" value="ECO:0007669"/>
    <property type="project" value="UniProtKB-UniRule"/>
</dbReference>
<dbReference type="GO" id="GO:0003676">
    <property type="term" value="F:nucleic acid binding"/>
    <property type="evidence" value="ECO:0007669"/>
    <property type="project" value="InterPro"/>
</dbReference>
<dbReference type="GO" id="GO:0006422">
    <property type="term" value="P:aspartyl-tRNA aminoacylation"/>
    <property type="evidence" value="ECO:0007669"/>
    <property type="project" value="UniProtKB-UniRule"/>
</dbReference>
<dbReference type="CDD" id="cd00777">
    <property type="entry name" value="AspRS_core"/>
    <property type="match status" value="1"/>
</dbReference>
<dbReference type="CDD" id="cd04317">
    <property type="entry name" value="EcAspRS_like_N"/>
    <property type="match status" value="1"/>
</dbReference>
<dbReference type="Gene3D" id="3.30.930.10">
    <property type="entry name" value="Bira Bifunctional Protein, Domain 2"/>
    <property type="match status" value="1"/>
</dbReference>
<dbReference type="Gene3D" id="3.30.1360.30">
    <property type="entry name" value="GAD-like domain"/>
    <property type="match status" value="1"/>
</dbReference>
<dbReference type="Gene3D" id="2.40.50.140">
    <property type="entry name" value="Nucleic acid-binding proteins"/>
    <property type="match status" value="1"/>
</dbReference>
<dbReference type="HAMAP" id="MF_00044">
    <property type="entry name" value="Asp_tRNA_synth_type1"/>
    <property type="match status" value="1"/>
</dbReference>
<dbReference type="InterPro" id="IPR004364">
    <property type="entry name" value="Aa-tRNA-synt_II"/>
</dbReference>
<dbReference type="InterPro" id="IPR006195">
    <property type="entry name" value="aa-tRNA-synth_II"/>
</dbReference>
<dbReference type="InterPro" id="IPR045864">
    <property type="entry name" value="aa-tRNA-synth_II/BPL/LPL"/>
</dbReference>
<dbReference type="InterPro" id="IPR004524">
    <property type="entry name" value="Asp-tRNA-ligase_1"/>
</dbReference>
<dbReference type="InterPro" id="IPR047089">
    <property type="entry name" value="Asp-tRNA-ligase_1_N"/>
</dbReference>
<dbReference type="InterPro" id="IPR002312">
    <property type="entry name" value="Asp/Asn-tRNA-synth_IIb"/>
</dbReference>
<dbReference type="InterPro" id="IPR047090">
    <property type="entry name" value="AspRS_core"/>
</dbReference>
<dbReference type="InterPro" id="IPR004115">
    <property type="entry name" value="GAD-like_sf"/>
</dbReference>
<dbReference type="InterPro" id="IPR029351">
    <property type="entry name" value="GAD_dom"/>
</dbReference>
<dbReference type="InterPro" id="IPR012340">
    <property type="entry name" value="NA-bd_OB-fold"/>
</dbReference>
<dbReference type="InterPro" id="IPR004365">
    <property type="entry name" value="NA-bd_OB_tRNA"/>
</dbReference>
<dbReference type="NCBIfam" id="TIGR00459">
    <property type="entry name" value="aspS_bact"/>
    <property type="match status" value="1"/>
</dbReference>
<dbReference type="NCBIfam" id="NF001750">
    <property type="entry name" value="PRK00476.1"/>
    <property type="match status" value="1"/>
</dbReference>
<dbReference type="PANTHER" id="PTHR22594:SF5">
    <property type="entry name" value="ASPARTATE--TRNA LIGASE, MITOCHONDRIAL"/>
    <property type="match status" value="1"/>
</dbReference>
<dbReference type="PANTHER" id="PTHR22594">
    <property type="entry name" value="ASPARTYL/LYSYL-TRNA SYNTHETASE"/>
    <property type="match status" value="1"/>
</dbReference>
<dbReference type="Pfam" id="PF02938">
    <property type="entry name" value="GAD"/>
    <property type="match status" value="1"/>
</dbReference>
<dbReference type="Pfam" id="PF00152">
    <property type="entry name" value="tRNA-synt_2"/>
    <property type="match status" value="1"/>
</dbReference>
<dbReference type="Pfam" id="PF01336">
    <property type="entry name" value="tRNA_anti-codon"/>
    <property type="match status" value="1"/>
</dbReference>
<dbReference type="PRINTS" id="PR01042">
    <property type="entry name" value="TRNASYNTHASP"/>
</dbReference>
<dbReference type="SUPFAM" id="SSF55681">
    <property type="entry name" value="Class II aaRS and biotin synthetases"/>
    <property type="match status" value="1"/>
</dbReference>
<dbReference type="SUPFAM" id="SSF55261">
    <property type="entry name" value="GAD domain-like"/>
    <property type="match status" value="1"/>
</dbReference>
<dbReference type="SUPFAM" id="SSF50249">
    <property type="entry name" value="Nucleic acid-binding proteins"/>
    <property type="match status" value="1"/>
</dbReference>
<dbReference type="PROSITE" id="PS50862">
    <property type="entry name" value="AA_TRNA_LIGASE_II"/>
    <property type="match status" value="1"/>
</dbReference>
<reference key="1">
    <citation type="submission" date="2006-12" db="EMBL/GenBank/DDBJ databases">
        <title>Complete sequence of chromosome of Mycobacterium sp. KMS.</title>
        <authorList>
            <consortium name="US DOE Joint Genome Institute"/>
            <person name="Copeland A."/>
            <person name="Lucas S."/>
            <person name="Lapidus A."/>
            <person name="Barry K."/>
            <person name="Detter J.C."/>
            <person name="Glavina del Rio T."/>
            <person name="Hammon N."/>
            <person name="Israni S."/>
            <person name="Dalin E."/>
            <person name="Tice H."/>
            <person name="Pitluck S."/>
            <person name="Kiss H."/>
            <person name="Brettin T."/>
            <person name="Bruce D."/>
            <person name="Han C."/>
            <person name="Tapia R."/>
            <person name="Gilna P."/>
            <person name="Schmutz J."/>
            <person name="Larimer F."/>
            <person name="Land M."/>
            <person name="Hauser L."/>
            <person name="Kyrpides N."/>
            <person name="Mikhailova N."/>
            <person name="Miller C.D."/>
            <person name="Richardson P."/>
        </authorList>
    </citation>
    <scope>NUCLEOTIDE SEQUENCE [LARGE SCALE GENOMIC DNA]</scope>
    <source>
        <strain>KMS</strain>
    </source>
</reference>
<proteinExistence type="inferred from homology"/>
<sequence length="590" mass="64220">MLRSHAAGSLRPADAGQNVTLAGWVARRRDHGGVIFIDLRDASGVSQVVFREGAVLEAAHRLRAEFCVAVEGVVEVRPEGNENPEIPTGGIEVNATSLTVLGESAPLPFQLDDEAGEEARLKYRYLDLRREGPGKALRLRSKVNAAAREVLARHDFVEIETPTMTRSTPEGARDFLVPARLQPGSFYALPQSPQLFKQLLMVAGMERYYQIARCYRDEDFRADRQPEFTQLDMEMSFVDADDVIAVSEEILKALWALIGHDLPTPLPRITYAEAMHRFGTDKPDLRFGLELVECKEFFADTTFRVFQAPYVGAVVMPGGASQPRRTLDGWQEWAKQRGAKGLAYVLVGDDGTLGGPVAKNLTDAERDGLAAHVGANPGDCIFFAAGPPKSSRALLGAARIEIAKRLDMIDPDAWAFTWVVDWPLFEMAEDATAAGDVAVGSGAWTAVHHAFTAPQPQSEATFDTDPAGALADAYDIVCNGNEIGGGSIRIHRRDVQERVFAMMGIEHDEAQEKFGFLLDAFTFGAPPHGGIAFGWDRITALLARMDSIREVIAFPKSGGGADPLTGAPAPITPQQRRESGIDAKPKKDGE</sequence>
<protein>
    <recommendedName>
        <fullName evidence="1">Aspartate--tRNA(Asp/Asn) ligase</fullName>
        <ecNumber evidence="1">6.1.1.23</ecNumber>
    </recommendedName>
    <alternativeName>
        <fullName evidence="1">Aspartyl-tRNA synthetase</fullName>
        <shortName evidence="1">AspRS</shortName>
    </alternativeName>
    <alternativeName>
        <fullName evidence="1">Non-discriminating aspartyl-tRNA synthetase</fullName>
        <shortName evidence="1">ND-AspRS</shortName>
    </alternativeName>
</protein>
<feature type="chain" id="PRO_1000006713" description="Aspartate--tRNA(Asp/Asn) ligase">
    <location>
        <begin position="1"/>
        <end position="590"/>
    </location>
</feature>
<feature type="region of interest" description="Aspartate" evidence="1">
    <location>
        <begin position="194"/>
        <end position="197"/>
    </location>
</feature>
<feature type="region of interest" description="Disordered" evidence="2">
    <location>
        <begin position="557"/>
        <end position="590"/>
    </location>
</feature>
<feature type="compositionally biased region" description="Basic and acidic residues" evidence="2">
    <location>
        <begin position="575"/>
        <end position="590"/>
    </location>
</feature>
<feature type="binding site" evidence="1">
    <location>
        <position position="170"/>
    </location>
    <ligand>
        <name>L-aspartate</name>
        <dbReference type="ChEBI" id="CHEBI:29991"/>
    </ligand>
</feature>
<feature type="binding site" evidence="1">
    <location>
        <begin position="216"/>
        <end position="218"/>
    </location>
    <ligand>
        <name>ATP</name>
        <dbReference type="ChEBI" id="CHEBI:30616"/>
    </ligand>
</feature>
<feature type="binding site" evidence="1">
    <location>
        <position position="216"/>
    </location>
    <ligand>
        <name>L-aspartate</name>
        <dbReference type="ChEBI" id="CHEBI:29991"/>
    </ligand>
</feature>
<feature type="binding site" evidence="1">
    <location>
        <position position="225"/>
    </location>
    <ligand>
        <name>ATP</name>
        <dbReference type="ChEBI" id="CHEBI:30616"/>
    </ligand>
</feature>
<feature type="binding site" evidence="1">
    <location>
        <position position="448"/>
    </location>
    <ligand>
        <name>L-aspartate</name>
        <dbReference type="ChEBI" id="CHEBI:29991"/>
    </ligand>
</feature>
<feature type="binding site" evidence="1">
    <location>
        <position position="482"/>
    </location>
    <ligand>
        <name>ATP</name>
        <dbReference type="ChEBI" id="CHEBI:30616"/>
    </ligand>
</feature>
<feature type="binding site" evidence="1">
    <location>
        <position position="489"/>
    </location>
    <ligand>
        <name>L-aspartate</name>
        <dbReference type="ChEBI" id="CHEBI:29991"/>
    </ligand>
</feature>
<feature type="binding site" evidence="1">
    <location>
        <begin position="534"/>
        <end position="537"/>
    </location>
    <ligand>
        <name>ATP</name>
        <dbReference type="ChEBI" id="CHEBI:30616"/>
    </ligand>
</feature>
<feature type="site" description="Important for tRNA non-discrimination" evidence="1">
    <location>
        <position position="31"/>
    </location>
</feature>
<feature type="site" description="Important for tRNA non-discrimination" evidence="1">
    <location>
        <position position="80"/>
    </location>
</feature>
<organism>
    <name type="scientific">Mycobacterium sp. (strain KMS)</name>
    <dbReference type="NCBI Taxonomy" id="189918"/>
    <lineage>
        <taxon>Bacteria</taxon>
        <taxon>Bacillati</taxon>
        <taxon>Actinomycetota</taxon>
        <taxon>Actinomycetes</taxon>
        <taxon>Mycobacteriales</taxon>
        <taxon>Mycobacteriaceae</taxon>
        <taxon>Mycobacterium</taxon>
    </lineage>
</organism>
<gene>
    <name evidence="1" type="primary">aspS</name>
    <name type="ordered locus">Mkms_2355</name>
</gene>